<proteinExistence type="inferred from homology"/>
<gene>
    <name evidence="1" type="primary">thrS</name>
    <name type="ordered locus">SPC_2399</name>
</gene>
<comment type="function">
    <text evidence="1">Catalyzes the attachment of threonine to tRNA(Thr) in a two-step reaction: L-threonine is first activated by ATP to form Thr-AMP and then transferred to the acceptor end of tRNA(Thr). Also edits incorrectly charged L-seryl-tRNA(Thr).</text>
</comment>
<comment type="catalytic activity">
    <reaction evidence="1">
        <text>tRNA(Thr) + L-threonine + ATP = L-threonyl-tRNA(Thr) + AMP + diphosphate + H(+)</text>
        <dbReference type="Rhea" id="RHEA:24624"/>
        <dbReference type="Rhea" id="RHEA-COMP:9670"/>
        <dbReference type="Rhea" id="RHEA-COMP:9704"/>
        <dbReference type="ChEBI" id="CHEBI:15378"/>
        <dbReference type="ChEBI" id="CHEBI:30616"/>
        <dbReference type="ChEBI" id="CHEBI:33019"/>
        <dbReference type="ChEBI" id="CHEBI:57926"/>
        <dbReference type="ChEBI" id="CHEBI:78442"/>
        <dbReference type="ChEBI" id="CHEBI:78534"/>
        <dbReference type="ChEBI" id="CHEBI:456215"/>
        <dbReference type="EC" id="6.1.1.3"/>
    </reaction>
</comment>
<comment type="cofactor">
    <cofactor evidence="1">
        <name>Zn(2+)</name>
        <dbReference type="ChEBI" id="CHEBI:29105"/>
    </cofactor>
    <text evidence="1">Binds 1 zinc ion per subunit.</text>
</comment>
<comment type="subunit">
    <text evidence="1">Homodimer.</text>
</comment>
<comment type="subcellular location">
    <subcellularLocation>
        <location evidence="1">Cytoplasm</location>
    </subcellularLocation>
</comment>
<comment type="similarity">
    <text evidence="1">Belongs to the class-II aminoacyl-tRNA synthetase family.</text>
</comment>
<reference key="1">
    <citation type="journal article" date="2009" name="PLoS ONE">
        <title>Salmonella paratyphi C: genetic divergence from Salmonella choleraesuis and pathogenic convergence with Salmonella typhi.</title>
        <authorList>
            <person name="Liu W.-Q."/>
            <person name="Feng Y."/>
            <person name="Wang Y."/>
            <person name="Zou Q.-H."/>
            <person name="Chen F."/>
            <person name="Guo J.-T."/>
            <person name="Peng Y.-H."/>
            <person name="Jin Y."/>
            <person name="Li Y.-G."/>
            <person name="Hu S.-N."/>
            <person name="Johnston R.N."/>
            <person name="Liu G.-R."/>
            <person name="Liu S.-L."/>
        </authorList>
    </citation>
    <scope>NUCLEOTIDE SEQUENCE [LARGE SCALE GENOMIC DNA]</scope>
    <source>
        <strain>RKS4594</strain>
    </source>
</reference>
<feature type="chain" id="PRO_1000199565" description="Threonine--tRNA ligase">
    <location>
        <begin position="1"/>
        <end position="642"/>
    </location>
</feature>
<feature type="domain" description="TGS" evidence="2">
    <location>
        <begin position="1"/>
        <end position="61"/>
    </location>
</feature>
<feature type="region of interest" description="Catalytic" evidence="1">
    <location>
        <begin position="243"/>
        <end position="534"/>
    </location>
</feature>
<feature type="binding site" evidence="1">
    <location>
        <position position="334"/>
    </location>
    <ligand>
        <name>Zn(2+)</name>
        <dbReference type="ChEBI" id="CHEBI:29105"/>
    </ligand>
</feature>
<feature type="binding site" evidence="1">
    <location>
        <position position="385"/>
    </location>
    <ligand>
        <name>Zn(2+)</name>
        <dbReference type="ChEBI" id="CHEBI:29105"/>
    </ligand>
</feature>
<feature type="binding site" evidence="1">
    <location>
        <position position="511"/>
    </location>
    <ligand>
        <name>Zn(2+)</name>
        <dbReference type="ChEBI" id="CHEBI:29105"/>
    </ligand>
</feature>
<protein>
    <recommendedName>
        <fullName evidence="1">Threonine--tRNA ligase</fullName>
        <ecNumber evidence="1">6.1.1.3</ecNumber>
    </recommendedName>
    <alternativeName>
        <fullName evidence="1">Threonyl-tRNA synthetase</fullName>
        <shortName evidence="1">ThrRS</shortName>
    </alternativeName>
</protein>
<keyword id="KW-0030">Aminoacyl-tRNA synthetase</keyword>
<keyword id="KW-0067">ATP-binding</keyword>
<keyword id="KW-0963">Cytoplasm</keyword>
<keyword id="KW-0436">Ligase</keyword>
<keyword id="KW-0479">Metal-binding</keyword>
<keyword id="KW-0547">Nucleotide-binding</keyword>
<keyword id="KW-0648">Protein biosynthesis</keyword>
<keyword id="KW-0694">RNA-binding</keyword>
<keyword id="KW-0820">tRNA-binding</keyword>
<keyword id="KW-0862">Zinc</keyword>
<organism>
    <name type="scientific">Salmonella paratyphi C (strain RKS4594)</name>
    <dbReference type="NCBI Taxonomy" id="476213"/>
    <lineage>
        <taxon>Bacteria</taxon>
        <taxon>Pseudomonadati</taxon>
        <taxon>Pseudomonadota</taxon>
        <taxon>Gammaproteobacteria</taxon>
        <taxon>Enterobacterales</taxon>
        <taxon>Enterobacteriaceae</taxon>
        <taxon>Salmonella</taxon>
    </lineage>
</organism>
<accession>C0Q647</accession>
<name>SYT_SALPC</name>
<sequence>MPVITLPDGSQRHYDHPVSPMDVALDIGPGLAKATIAGRVNGELVDACDLIENDATLAIITAKDEEGLEIIRHSCAHLLGHAIKQLWPHTKMAIGPVVDNGFYYDVDLDRTLTQEDVEALEKRMHELAEKNYDVIKKKVSWHDARETFVKRGETYKVAILDENIAHDDKPGLYHHEEYVDMCRGPHVPNMRFCHHFKLMKTAGAYWRGDSNNKMLQRIYGTAWADKKALNAYLQRLEEAAKRDHRKIGKQLDLYHMQEEAPGMVFWHNDGWTIFRELEVFVRSKLKEYQYQEVKGPFMMDRVLWEKTGHWDNYKDAMFTTSSENREYCIKPMNCPGHVQIFNQGLKSYRDLPLRMAEFGSCHRNEPSGALHGLMRVRGFTQDDAHIFCTEEQIRDEVNACIRMVYDMYSPFGFEKIVVKLSTRPDKRIGSDEMWDRAEADLAVALEENNIPFEYQLGEGAFYGPKIEFTLYDCLDRAWQCGTVQLDFSLPSRLSASYVGEDNERKVPVMIHRAILGSMERFIGILTEEFAGFFPTWLAPVQVVVMNITDSQSGYVNELTQKLQNAGIRVKADLRNEKIGFKIREHTLRRVPYMLVCGDKEVEAGKVAVRTRRGKDLGSLDVNDVIEKLQQEIRSRSLQQLEE</sequence>
<dbReference type="EC" id="6.1.1.3" evidence="1"/>
<dbReference type="EMBL" id="CP000857">
    <property type="protein sequence ID" value="ACN46513.1"/>
    <property type="molecule type" value="Genomic_DNA"/>
</dbReference>
<dbReference type="RefSeq" id="WP_001144214.1">
    <property type="nucleotide sequence ID" value="NC_012125.1"/>
</dbReference>
<dbReference type="SMR" id="C0Q647"/>
<dbReference type="KEGG" id="sei:SPC_2399"/>
<dbReference type="HOGENOM" id="CLU_008554_0_1_6"/>
<dbReference type="Proteomes" id="UP000001599">
    <property type="component" value="Chromosome"/>
</dbReference>
<dbReference type="GO" id="GO:0005829">
    <property type="term" value="C:cytosol"/>
    <property type="evidence" value="ECO:0007669"/>
    <property type="project" value="TreeGrafter"/>
</dbReference>
<dbReference type="GO" id="GO:0005524">
    <property type="term" value="F:ATP binding"/>
    <property type="evidence" value="ECO:0007669"/>
    <property type="project" value="UniProtKB-UniRule"/>
</dbReference>
<dbReference type="GO" id="GO:0046872">
    <property type="term" value="F:metal ion binding"/>
    <property type="evidence" value="ECO:0007669"/>
    <property type="project" value="UniProtKB-KW"/>
</dbReference>
<dbReference type="GO" id="GO:0004829">
    <property type="term" value="F:threonine-tRNA ligase activity"/>
    <property type="evidence" value="ECO:0007669"/>
    <property type="project" value="UniProtKB-UniRule"/>
</dbReference>
<dbReference type="GO" id="GO:0000049">
    <property type="term" value="F:tRNA binding"/>
    <property type="evidence" value="ECO:0007669"/>
    <property type="project" value="UniProtKB-KW"/>
</dbReference>
<dbReference type="GO" id="GO:0006435">
    <property type="term" value="P:threonyl-tRNA aminoacylation"/>
    <property type="evidence" value="ECO:0007669"/>
    <property type="project" value="UniProtKB-UniRule"/>
</dbReference>
<dbReference type="CDD" id="cd01667">
    <property type="entry name" value="TGS_ThrRS"/>
    <property type="match status" value="1"/>
</dbReference>
<dbReference type="CDD" id="cd00860">
    <property type="entry name" value="ThrRS_anticodon"/>
    <property type="match status" value="1"/>
</dbReference>
<dbReference type="CDD" id="cd00771">
    <property type="entry name" value="ThrRS_core"/>
    <property type="match status" value="1"/>
</dbReference>
<dbReference type="FunFam" id="3.10.20.30:FF:000005">
    <property type="entry name" value="Threonine--tRNA ligase"/>
    <property type="match status" value="1"/>
</dbReference>
<dbReference type="FunFam" id="3.30.54.20:FF:000002">
    <property type="entry name" value="Threonine--tRNA ligase"/>
    <property type="match status" value="1"/>
</dbReference>
<dbReference type="FunFam" id="3.30.930.10:FF:000002">
    <property type="entry name" value="Threonine--tRNA ligase"/>
    <property type="match status" value="1"/>
</dbReference>
<dbReference type="FunFam" id="3.40.50.800:FF:000001">
    <property type="entry name" value="Threonine--tRNA ligase"/>
    <property type="match status" value="1"/>
</dbReference>
<dbReference type="FunFam" id="3.30.980.10:FF:000005">
    <property type="entry name" value="Threonyl-tRNA synthetase, mitochondrial"/>
    <property type="match status" value="1"/>
</dbReference>
<dbReference type="Gene3D" id="3.10.20.30">
    <property type="match status" value="1"/>
</dbReference>
<dbReference type="Gene3D" id="3.30.54.20">
    <property type="match status" value="1"/>
</dbReference>
<dbReference type="Gene3D" id="3.40.50.800">
    <property type="entry name" value="Anticodon-binding domain"/>
    <property type="match status" value="1"/>
</dbReference>
<dbReference type="Gene3D" id="3.30.930.10">
    <property type="entry name" value="Bira Bifunctional Protein, Domain 2"/>
    <property type="match status" value="1"/>
</dbReference>
<dbReference type="Gene3D" id="3.30.980.10">
    <property type="entry name" value="Threonyl-trna Synthetase, Chain A, domain 2"/>
    <property type="match status" value="1"/>
</dbReference>
<dbReference type="HAMAP" id="MF_00184">
    <property type="entry name" value="Thr_tRNA_synth"/>
    <property type="match status" value="1"/>
</dbReference>
<dbReference type="InterPro" id="IPR002314">
    <property type="entry name" value="aa-tRNA-synt_IIb"/>
</dbReference>
<dbReference type="InterPro" id="IPR006195">
    <property type="entry name" value="aa-tRNA-synth_II"/>
</dbReference>
<dbReference type="InterPro" id="IPR045864">
    <property type="entry name" value="aa-tRNA-synth_II/BPL/LPL"/>
</dbReference>
<dbReference type="InterPro" id="IPR004154">
    <property type="entry name" value="Anticodon-bd"/>
</dbReference>
<dbReference type="InterPro" id="IPR036621">
    <property type="entry name" value="Anticodon-bd_dom_sf"/>
</dbReference>
<dbReference type="InterPro" id="IPR012675">
    <property type="entry name" value="Beta-grasp_dom_sf"/>
</dbReference>
<dbReference type="InterPro" id="IPR004095">
    <property type="entry name" value="TGS"/>
</dbReference>
<dbReference type="InterPro" id="IPR012676">
    <property type="entry name" value="TGS-like"/>
</dbReference>
<dbReference type="InterPro" id="IPR002320">
    <property type="entry name" value="Thr-tRNA-ligase_IIa"/>
</dbReference>
<dbReference type="InterPro" id="IPR018163">
    <property type="entry name" value="Thr/Ala-tRNA-synth_IIc_edit"/>
</dbReference>
<dbReference type="InterPro" id="IPR047246">
    <property type="entry name" value="ThrRS_anticodon"/>
</dbReference>
<dbReference type="InterPro" id="IPR033728">
    <property type="entry name" value="ThrRS_core"/>
</dbReference>
<dbReference type="InterPro" id="IPR012947">
    <property type="entry name" value="tRNA_SAD"/>
</dbReference>
<dbReference type="NCBIfam" id="TIGR00418">
    <property type="entry name" value="thrS"/>
    <property type="match status" value="1"/>
</dbReference>
<dbReference type="PANTHER" id="PTHR11451:SF44">
    <property type="entry name" value="THREONINE--TRNA LIGASE, CHLOROPLASTIC_MITOCHONDRIAL 2"/>
    <property type="match status" value="1"/>
</dbReference>
<dbReference type="PANTHER" id="PTHR11451">
    <property type="entry name" value="THREONINE-TRNA LIGASE"/>
    <property type="match status" value="1"/>
</dbReference>
<dbReference type="Pfam" id="PF03129">
    <property type="entry name" value="HGTP_anticodon"/>
    <property type="match status" value="1"/>
</dbReference>
<dbReference type="Pfam" id="PF02824">
    <property type="entry name" value="TGS"/>
    <property type="match status" value="1"/>
</dbReference>
<dbReference type="Pfam" id="PF00587">
    <property type="entry name" value="tRNA-synt_2b"/>
    <property type="match status" value="1"/>
</dbReference>
<dbReference type="Pfam" id="PF07973">
    <property type="entry name" value="tRNA_SAD"/>
    <property type="match status" value="1"/>
</dbReference>
<dbReference type="PRINTS" id="PR01047">
    <property type="entry name" value="TRNASYNTHTHR"/>
</dbReference>
<dbReference type="SMART" id="SM00863">
    <property type="entry name" value="tRNA_SAD"/>
    <property type="match status" value="1"/>
</dbReference>
<dbReference type="SUPFAM" id="SSF52954">
    <property type="entry name" value="Class II aaRS ABD-related"/>
    <property type="match status" value="1"/>
</dbReference>
<dbReference type="SUPFAM" id="SSF55681">
    <property type="entry name" value="Class II aaRS and biotin synthetases"/>
    <property type="match status" value="1"/>
</dbReference>
<dbReference type="SUPFAM" id="SSF81271">
    <property type="entry name" value="TGS-like"/>
    <property type="match status" value="1"/>
</dbReference>
<dbReference type="SUPFAM" id="SSF55186">
    <property type="entry name" value="ThrRS/AlaRS common domain"/>
    <property type="match status" value="1"/>
</dbReference>
<dbReference type="PROSITE" id="PS50862">
    <property type="entry name" value="AA_TRNA_LIGASE_II"/>
    <property type="match status" value="1"/>
</dbReference>
<dbReference type="PROSITE" id="PS51880">
    <property type="entry name" value="TGS"/>
    <property type="match status" value="1"/>
</dbReference>
<evidence type="ECO:0000255" key="1">
    <source>
        <dbReference type="HAMAP-Rule" id="MF_00184"/>
    </source>
</evidence>
<evidence type="ECO:0000255" key="2">
    <source>
        <dbReference type="PROSITE-ProRule" id="PRU01228"/>
    </source>
</evidence>